<name>AROE_CLOB1</name>
<comment type="function">
    <text evidence="1">Involved in the biosynthesis of the chorismate, which leads to the biosynthesis of aromatic amino acids. Catalyzes the reversible NADPH linked reduction of 3-dehydroshikimate (DHSA) to yield shikimate (SA).</text>
</comment>
<comment type="catalytic activity">
    <reaction evidence="1">
        <text>shikimate + NADP(+) = 3-dehydroshikimate + NADPH + H(+)</text>
        <dbReference type="Rhea" id="RHEA:17737"/>
        <dbReference type="ChEBI" id="CHEBI:15378"/>
        <dbReference type="ChEBI" id="CHEBI:16630"/>
        <dbReference type="ChEBI" id="CHEBI:36208"/>
        <dbReference type="ChEBI" id="CHEBI:57783"/>
        <dbReference type="ChEBI" id="CHEBI:58349"/>
        <dbReference type="EC" id="1.1.1.25"/>
    </reaction>
</comment>
<comment type="pathway">
    <text evidence="1">Metabolic intermediate biosynthesis; chorismate biosynthesis; chorismate from D-erythrose 4-phosphate and phosphoenolpyruvate: step 4/7.</text>
</comment>
<comment type="subunit">
    <text evidence="1">Homodimer.</text>
</comment>
<comment type="similarity">
    <text evidence="1">Belongs to the shikimate dehydrogenase family.</text>
</comment>
<sequence>MYTTGLIGKNINYSESPEIHNNYYKKNNIPFFYKIFNLKQDQIDDFIKNLHKNNIKGFNVTIPYKETILQYLNDIVYPADKIGAVNTVAVQEDKLIGYNTDYIGFIKSLQYYNIQVKNFKCLIIGSGGSAKCIYYALKELNARDICIVSRNPEKARLKFEKKVKILNIKDENKLDRYDLIVNCTPIGGPNLKEQKPIELKEIKKNCVVYDLNYTPKRSKLLKEAKENGAFIINGEKMLIFQAYSAIGLWCLNGIKGGR</sequence>
<reference key="1">
    <citation type="journal article" date="2007" name="PLoS ONE">
        <title>Analysis of the neurotoxin complex genes in Clostridium botulinum A1-A4 and B1 strains: BoNT/A3, /Ba4 and /B1 clusters are located within plasmids.</title>
        <authorList>
            <person name="Smith T.J."/>
            <person name="Hill K.K."/>
            <person name="Foley B.T."/>
            <person name="Detter J.C."/>
            <person name="Munk A.C."/>
            <person name="Bruce D.C."/>
            <person name="Doggett N.A."/>
            <person name="Smith L.A."/>
            <person name="Marks J.D."/>
            <person name="Xie G."/>
            <person name="Brettin T.S."/>
        </authorList>
    </citation>
    <scope>NUCLEOTIDE SEQUENCE [LARGE SCALE GENOMIC DNA]</scope>
    <source>
        <strain>ATCC 19397 / Type A</strain>
    </source>
</reference>
<keyword id="KW-0028">Amino-acid biosynthesis</keyword>
<keyword id="KW-0057">Aromatic amino acid biosynthesis</keyword>
<keyword id="KW-0521">NADP</keyword>
<keyword id="KW-0560">Oxidoreductase</keyword>
<organism>
    <name type="scientific">Clostridium botulinum (strain ATCC 19397 / Type A)</name>
    <dbReference type="NCBI Taxonomy" id="441770"/>
    <lineage>
        <taxon>Bacteria</taxon>
        <taxon>Bacillati</taxon>
        <taxon>Bacillota</taxon>
        <taxon>Clostridia</taxon>
        <taxon>Eubacteriales</taxon>
        <taxon>Clostridiaceae</taxon>
        <taxon>Clostridium</taxon>
    </lineage>
</organism>
<accession>A7FWA9</accession>
<evidence type="ECO:0000255" key="1">
    <source>
        <dbReference type="HAMAP-Rule" id="MF_00222"/>
    </source>
</evidence>
<dbReference type="EC" id="1.1.1.25" evidence="1"/>
<dbReference type="EMBL" id="CP000726">
    <property type="protein sequence ID" value="ABS35687.1"/>
    <property type="molecule type" value="Genomic_DNA"/>
</dbReference>
<dbReference type="RefSeq" id="WP_011986860.1">
    <property type="nucleotide sequence ID" value="NC_009697.1"/>
</dbReference>
<dbReference type="SMR" id="A7FWA9"/>
<dbReference type="GeneID" id="5187986"/>
<dbReference type="KEGG" id="cba:CLB_2416"/>
<dbReference type="HOGENOM" id="CLU_044063_4_1_9"/>
<dbReference type="UniPathway" id="UPA00053">
    <property type="reaction ID" value="UER00087"/>
</dbReference>
<dbReference type="GO" id="GO:0005829">
    <property type="term" value="C:cytosol"/>
    <property type="evidence" value="ECO:0007669"/>
    <property type="project" value="TreeGrafter"/>
</dbReference>
<dbReference type="GO" id="GO:0050661">
    <property type="term" value="F:NADP binding"/>
    <property type="evidence" value="ECO:0007669"/>
    <property type="project" value="InterPro"/>
</dbReference>
<dbReference type="GO" id="GO:0004764">
    <property type="term" value="F:shikimate 3-dehydrogenase (NADP+) activity"/>
    <property type="evidence" value="ECO:0007669"/>
    <property type="project" value="UniProtKB-UniRule"/>
</dbReference>
<dbReference type="GO" id="GO:0008652">
    <property type="term" value="P:amino acid biosynthetic process"/>
    <property type="evidence" value="ECO:0007669"/>
    <property type="project" value="UniProtKB-KW"/>
</dbReference>
<dbReference type="GO" id="GO:0009073">
    <property type="term" value="P:aromatic amino acid family biosynthetic process"/>
    <property type="evidence" value="ECO:0007669"/>
    <property type="project" value="UniProtKB-KW"/>
</dbReference>
<dbReference type="GO" id="GO:0009423">
    <property type="term" value="P:chorismate biosynthetic process"/>
    <property type="evidence" value="ECO:0007669"/>
    <property type="project" value="UniProtKB-UniRule"/>
</dbReference>
<dbReference type="GO" id="GO:0019632">
    <property type="term" value="P:shikimate metabolic process"/>
    <property type="evidence" value="ECO:0007669"/>
    <property type="project" value="InterPro"/>
</dbReference>
<dbReference type="CDD" id="cd01065">
    <property type="entry name" value="NAD_bind_Shikimate_DH"/>
    <property type="match status" value="1"/>
</dbReference>
<dbReference type="FunFam" id="3.40.50.720:FF:000853">
    <property type="entry name" value="Shikimate dehydrogenase (NADP(+))"/>
    <property type="match status" value="1"/>
</dbReference>
<dbReference type="Gene3D" id="3.40.50.10860">
    <property type="entry name" value="Leucine Dehydrogenase, chain A, domain 1"/>
    <property type="match status" value="1"/>
</dbReference>
<dbReference type="Gene3D" id="3.40.50.720">
    <property type="entry name" value="NAD(P)-binding Rossmann-like Domain"/>
    <property type="match status" value="1"/>
</dbReference>
<dbReference type="HAMAP" id="MF_00222">
    <property type="entry name" value="Shikimate_DH_AroE"/>
    <property type="match status" value="1"/>
</dbReference>
<dbReference type="InterPro" id="IPR046346">
    <property type="entry name" value="Aminoacid_DH-like_N_sf"/>
</dbReference>
<dbReference type="InterPro" id="IPR036291">
    <property type="entry name" value="NAD(P)-bd_dom_sf"/>
</dbReference>
<dbReference type="InterPro" id="IPR011342">
    <property type="entry name" value="Shikimate_DH"/>
</dbReference>
<dbReference type="InterPro" id="IPR013708">
    <property type="entry name" value="Shikimate_DH-bd_N"/>
</dbReference>
<dbReference type="InterPro" id="IPR022893">
    <property type="entry name" value="Shikimate_DH_fam"/>
</dbReference>
<dbReference type="InterPro" id="IPR006151">
    <property type="entry name" value="Shikm_DH/Glu-tRNA_Rdtase"/>
</dbReference>
<dbReference type="NCBIfam" id="TIGR00507">
    <property type="entry name" value="aroE"/>
    <property type="match status" value="1"/>
</dbReference>
<dbReference type="PANTHER" id="PTHR21089:SF1">
    <property type="entry name" value="BIFUNCTIONAL 3-DEHYDROQUINATE DEHYDRATASE_SHIKIMATE DEHYDROGENASE, CHLOROPLASTIC"/>
    <property type="match status" value="1"/>
</dbReference>
<dbReference type="PANTHER" id="PTHR21089">
    <property type="entry name" value="SHIKIMATE DEHYDROGENASE"/>
    <property type="match status" value="1"/>
</dbReference>
<dbReference type="Pfam" id="PF01488">
    <property type="entry name" value="Shikimate_DH"/>
    <property type="match status" value="1"/>
</dbReference>
<dbReference type="Pfam" id="PF08501">
    <property type="entry name" value="Shikimate_dh_N"/>
    <property type="match status" value="1"/>
</dbReference>
<dbReference type="SUPFAM" id="SSF53223">
    <property type="entry name" value="Aminoacid dehydrogenase-like, N-terminal domain"/>
    <property type="match status" value="1"/>
</dbReference>
<dbReference type="SUPFAM" id="SSF51735">
    <property type="entry name" value="NAD(P)-binding Rossmann-fold domains"/>
    <property type="match status" value="1"/>
</dbReference>
<gene>
    <name evidence="1" type="primary">aroE</name>
    <name type="ordered locus">CLB_2416</name>
</gene>
<proteinExistence type="inferred from homology"/>
<feature type="chain" id="PRO_1000021274" description="Shikimate dehydrogenase (NADP(+))">
    <location>
        <begin position="1"/>
        <end position="258"/>
    </location>
</feature>
<feature type="active site" description="Proton acceptor" evidence="1">
    <location>
        <position position="65"/>
    </location>
</feature>
<feature type="binding site" evidence="1">
    <location>
        <begin position="14"/>
        <end position="16"/>
    </location>
    <ligand>
        <name>shikimate</name>
        <dbReference type="ChEBI" id="CHEBI:36208"/>
    </ligand>
</feature>
<feature type="binding site" evidence="1">
    <location>
        <position position="61"/>
    </location>
    <ligand>
        <name>shikimate</name>
        <dbReference type="ChEBI" id="CHEBI:36208"/>
    </ligand>
</feature>
<feature type="binding site" evidence="1">
    <location>
        <position position="86"/>
    </location>
    <ligand>
        <name>shikimate</name>
        <dbReference type="ChEBI" id="CHEBI:36208"/>
    </ligand>
</feature>
<feature type="binding site" evidence="1">
    <location>
        <position position="101"/>
    </location>
    <ligand>
        <name>shikimate</name>
        <dbReference type="ChEBI" id="CHEBI:36208"/>
    </ligand>
</feature>
<feature type="binding site" evidence="1">
    <location>
        <begin position="125"/>
        <end position="129"/>
    </location>
    <ligand>
        <name>NADP(+)</name>
        <dbReference type="ChEBI" id="CHEBI:58349"/>
    </ligand>
</feature>
<feature type="binding site" evidence="1">
    <location>
        <position position="211"/>
    </location>
    <ligand>
        <name>NADP(+)</name>
        <dbReference type="ChEBI" id="CHEBI:58349"/>
    </ligand>
</feature>
<feature type="binding site" evidence="1">
    <location>
        <position position="213"/>
    </location>
    <ligand>
        <name>shikimate</name>
        <dbReference type="ChEBI" id="CHEBI:36208"/>
    </ligand>
</feature>
<feature type="binding site" evidence="1">
    <location>
        <position position="234"/>
    </location>
    <ligand>
        <name>NADP(+)</name>
        <dbReference type="ChEBI" id="CHEBI:58349"/>
    </ligand>
</feature>
<protein>
    <recommendedName>
        <fullName evidence="1">Shikimate dehydrogenase (NADP(+))</fullName>
        <shortName evidence="1">SDH</shortName>
        <ecNumber evidence="1">1.1.1.25</ecNumber>
    </recommendedName>
</protein>